<accession>P03883</accession>
<dbReference type="EMBL" id="J01390">
    <property type="protein sequence ID" value="AAA99206.1"/>
    <property type="molecule type" value="Genomic_DNA"/>
</dbReference>
<dbReference type="EMBL" id="X06960">
    <property type="protein sequence ID" value="CAA30030.1"/>
    <property type="molecule type" value="Genomic_DNA"/>
</dbReference>
<dbReference type="PIR" id="E93436">
    <property type="entry name" value="QXASC"/>
</dbReference>
<dbReference type="SMR" id="P03883"/>
<dbReference type="GO" id="GO:0005739">
    <property type="term" value="C:mitochondrion"/>
    <property type="evidence" value="ECO:0007669"/>
    <property type="project" value="UniProtKB-SubCell"/>
</dbReference>
<dbReference type="GO" id="GO:0045271">
    <property type="term" value="C:respiratory chain complex I"/>
    <property type="evidence" value="ECO:0000266"/>
    <property type="project" value="AspGD"/>
</dbReference>
<dbReference type="GO" id="GO:0008137">
    <property type="term" value="F:NADH dehydrogenase (ubiquinone) activity"/>
    <property type="evidence" value="ECO:0007669"/>
    <property type="project" value="InterPro"/>
</dbReference>
<dbReference type="GO" id="GO:0006120">
    <property type="term" value="P:mitochondrial electron transport, NADH to ubiquinone"/>
    <property type="evidence" value="ECO:0000266"/>
    <property type="project" value="AspGD"/>
</dbReference>
<dbReference type="FunFam" id="1.20.120.1200:FF:000008">
    <property type="entry name" value="NADH-ubiquinone oxidoreductase chain 6"/>
    <property type="match status" value="1"/>
</dbReference>
<dbReference type="Gene3D" id="1.20.120.1200">
    <property type="entry name" value="NADH-ubiquinone/plastoquinone oxidoreductase chain 6, subunit NuoJ"/>
    <property type="match status" value="1"/>
</dbReference>
<dbReference type="InterPro" id="IPR001457">
    <property type="entry name" value="NADH_UbQ/plastoQ_OxRdtase_su6"/>
</dbReference>
<dbReference type="InterPro" id="IPR042106">
    <property type="entry name" value="Nuo/plastoQ_OxRdtase_6_NuoJ"/>
</dbReference>
<dbReference type="PANTHER" id="PTHR33269">
    <property type="entry name" value="NADH-UBIQUINONE OXIDOREDUCTASE CHAIN 6"/>
    <property type="match status" value="1"/>
</dbReference>
<dbReference type="PANTHER" id="PTHR33269:SF17">
    <property type="entry name" value="NADH-UBIQUINONE OXIDOREDUCTASE CHAIN 6"/>
    <property type="match status" value="1"/>
</dbReference>
<dbReference type="Pfam" id="PF00499">
    <property type="entry name" value="Oxidored_q3"/>
    <property type="match status" value="1"/>
</dbReference>
<keyword id="KW-0496">Mitochondrion</keyword>
<organism>
    <name type="scientific">Emericella nidulans</name>
    <name type="common">Aspergillus nidulans</name>
    <dbReference type="NCBI Taxonomy" id="162425"/>
    <lineage>
        <taxon>Eukaryota</taxon>
        <taxon>Fungi</taxon>
        <taxon>Dikarya</taxon>
        <taxon>Ascomycota</taxon>
        <taxon>Pezizomycotina</taxon>
        <taxon>Eurotiomycetes</taxon>
        <taxon>Eurotiomycetidae</taxon>
        <taxon>Eurotiales</taxon>
        <taxon>Aspergillaceae</taxon>
        <taxon>Aspergillus</taxon>
        <taxon>Aspergillus subgen. Nidulantes</taxon>
    </lineage>
</organism>
<sequence length="228" mass="25381">MNNIFYNDYISNGLLEVLLINDYITNGFKVEFLDIFYIISITFGVFTIISRNPVVSVLFLIGLFVNIAGILILAGINYLGLSYILVYVGAVSILFLFILMLINIRISELLSETNNDIPLAVLTVLLFYYIIGQVLPCNLTDKTIISSLSNRFTGIYNIDISNQSSIVGINQEIGYVSSKGWDNTLVEFTQISGIGNIMYTNYSIWLIISSVILLLGMVGAIVITIKQK</sequence>
<feature type="chain" id="PRO_0000196893" description="Uncharacterized 25.4 kDa protein in COX3 5'region">
    <location>
        <begin position="1"/>
        <end position="228"/>
    </location>
</feature>
<name>YMCC_EMEND</name>
<reference key="1">
    <citation type="journal article" date="1982" name="Nucleic Acids Res.">
        <title>Nucleotide sequence of Aspergillus nidulans mitochondrial genes coding for ATPase subunit 6, cytochrome oxidase subunit 3, seven unidentified proteins, four tRNAs and L-rRNA.</title>
        <authorList>
            <person name="Netzker R."/>
            <person name="Koechel H.G."/>
            <person name="Basak N."/>
            <person name="Kuentzel H."/>
        </authorList>
    </citation>
    <scope>NUCLEOTIDE SEQUENCE [GENOMIC DNA]</scope>
    <source>
        <strain>pabaA1 biA1</strain>
    </source>
</reference>
<proteinExistence type="predicted"/>
<geneLocation type="mitochondrion"/>
<protein>
    <recommendedName>
        <fullName>Uncharacterized 25.4 kDa protein in COX3 5'region</fullName>
    </recommendedName>
    <alternativeName>
        <fullName>URF-C</fullName>
    </alternativeName>
</protein>
<comment type="subcellular location">
    <subcellularLocation>
        <location>Mitochondrion</location>
    </subcellularLocation>
</comment>